<comment type="function">
    <text evidence="1 2">Catalyzes the production of nitric oxide.</text>
</comment>
<comment type="catalytic activity">
    <reaction evidence="2">
        <text>3 reduced [flavodoxin] + 2 L-arginine + 4 O2 = 3 oxidized [flavodoxin] + 2 L-citrulline + 2 nitric oxide + 4 H2O + 5 H(+)</text>
        <dbReference type="Rhea" id="RHEA:52324"/>
        <dbReference type="Rhea" id="RHEA-COMP:10622"/>
        <dbReference type="Rhea" id="RHEA-COMP:10623"/>
        <dbReference type="ChEBI" id="CHEBI:15377"/>
        <dbReference type="ChEBI" id="CHEBI:15378"/>
        <dbReference type="ChEBI" id="CHEBI:15379"/>
        <dbReference type="ChEBI" id="CHEBI:16480"/>
        <dbReference type="ChEBI" id="CHEBI:32682"/>
        <dbReference type="ChEBI" id="CHEBI:57618"/>
        <dbReference type="ChEBI" id="CHEBI:57743"/>
        <dbReference type="ChEBI" id="CHEBI:58210"/>
        <dbReference type="EC" id="1.14.14.47"/>
    </reaction>
</comment>
<comment type="cofactor">
    <cofactor evidence="2">
        <name>heme</name>
        <dbReference type="ChEBI" id="CHEBI:30413"/>
    </cofactor>
</comment>
<comment type="cofactor">
    <cofactor evidence="2">
        <name>(6S)-5,6,7,8-tetrahydrofolate</name>
        <dbReference type="ChEBI" id="CHEBI:57453"/>
    </cofactor>
</comment>
<comment type="subunit">
    <text evidence="2">Homodimer.</text>
</comment>
<comment type="miscellaneous">
    <text>This protein is similar to the oxygenase domain of eukaryotic nitric oxide synthases but lacks the reductase domain which, in eukaryotes, is responsible for transfer of electrons to the ferric heme during nitric oxide synthesis.</text>
</comment>
<comment type="similarity">
    <text evidence="3">Belongs to the NOS family. Bacterial NOS oxygenase subfamily.</text>
</comment>
<name>NOSO_STAAR</name>
<keyword id="KW-0349">Heme</keyword>
<keyword id="KW-0408">Iron</keyword>
<keyword id="KW-0479">Metal-binding</keyword>
<keyword id="KW-0560">Oxidoreductase</keyword>
<reference key="1">
    <citation type="journal article" date="2004" name="Proc. Natl. Acad. Sci. U.S.A.">
        <title>Complete genomes of two clinical Staphylococcus aureus strains: evidence for the rapid evolution of virulence and drug resistance.</title>
        <authorList>
            <person name="Holden M.T.G."/>
            <person name="Feil E.J."/>
            <person name="Lindsay J.A."/>
            <person name="Peacock S.J."/>
            <person name="Day N.P.J."/>
            <person name="Enright M.C."/>
            <person name="Foster T.J."/>
            <person name="Moore C.E."/>
            <person name="Hurst L."/>
            <person name="Atkin R."/>
            <person name="Barron A."/>
            <person name="Bason N."/>
            <person name="Bentley S.D."/>
            <person name="Chillingworth C."/>
            <person name="Chillingworth T."/>
            <person name="Churcher C."/>
            <person name="Clark L."/>
            <person name="Corton C."/>
            <person name="Cronin A."/>
            <person name="Doggett J."/>
            <person name="Dowd L."/>
            <person name="Feltwell T."/>
            <person name="Hance Z."/>
            <person name="Harris B."/>
            <person name="Hauser H."/>
            <person name="Holroyd S."/>
            <person name="Jagels K."/>
            <person name="James K.D."/>
            <person name="Lennard N."/>
            <person name="Line A."/>
            <person name="Mayes R."/>
            <person name="Moule S."/>
            <person name="Mungall K."/>
            <person name="Ormond D."/>
            <person name="Quail M.A."/>
            <person name="Rabbinowitsch E."/>
            <person name="Rutherford K.M."/>
            <person name="Sanders M."/>
            <person name="Sharp S."/>
            <person name="Simmonds M."/>
            <person name="Stevens K."/>
            <person name="Whitehead S."/>
            <person name="Barrell B.G."/>
            <person name="Spratt B.G."/>
            <person name="Parkhill J."/>
        </authorList>
    </citation>
    <scope>NUCLEOTIDE SEQUENCE [LARGE SCALE GENOMIC DNA]</scope>
    <source>
        <strain>MRSA252</strain>
    </source>
</reference>
<feature type="chain" id="PRO_0000170958" description="Nitric oxide synthase oxygenase">
    <location>
        <begin position="1"/>
        <end position="358"/>
    </location>
</feature>
<feature type="binding site" description="axial binding residue" evidence="1">
    <location>
        <position position="62"/>
    </location>
    <ligand>
        <name>heme</name>
        <dbReference type="ChEBI" id="CHEBI:30413"/>
    </ligand>
    <ligandPart>
        <name>Fe</name>
        <dbReference type="ChEBI" id="CHEBI:18248"/>
    </ligandPart>
</feature>
<proteinExistence type="inferred from homology"/>
<sequence>MLFKEAQAFIENMYKECHYETQIINKRLHDIELEIKETGTYTHTEEELIYGAKMAWRNSNRCIGRLFWDSLNVIDARDVTDEASFLSSINYHIAQATNEGKLKPYITIYAPKDGPKIFNNQLIRYAGYDNCGDPAEKEVTRLANHLGWKGKGTNFDVLPLIYQLPNESVKYYEYPTSLIKEVPIEHDHYPKLRKLNLKWYAVPIISNMDLKIGGIVYPTAPFNGWYMVTEIGVRNFIDDYRYNLLEKVADAFEFDTLKNNSFNKDRALVELNYAVYHSFKKEGVSIVDHLTAAKQFELFERNEAQQGRQVTGKWSWLAPPLSPTLTSNYHHGYDNTVKDPNFFYKKKKSNANQCPFHH</sequence>
<protein>
    <recommendedName>
        <fullName>Nitric oxide synthase oxygenase</fullName>
        <ecNumber evidence="2">1.14.14.47</ecNumber>
    </recommendedName>
    <alternativeName>
        <fullName>NOSoxy-like protein</fullName>
    </alternativeName>
    <alternativeName>
        <fullName>SANOS</fullName>
    </alternativeName>
</protein>
<accession>Q6GFE2</accession>
<dbReference type="EC" id="1.14.14.47" evidence="2"/>
<dbReference type="EMBL" id="BX571856">
    <property type="protein sequence ID" value="CAG40992.1"/>
    <property type="molecule type" value="Genomic_DNA"/>
</dbReference>
<dbReference type="RefSeq" id="WP_000897633.1">
    <property type="nucleotide sequence ID" value="NC_002952.2"/>
</dbReference>
<dbReference type="SMR" id="Q6GFE2"/>
<dbReference type="KEGG" id="sar:SAR2007"/>
<dbReference type="HOGENOM" id="CLU_040293_0_0_9"/>
<dbReference type="PHI-base" id="PHI:3285"/>
<dbReference type="Proteomes" id="UP000000596">
    <property type="component" value="Chromosome"/>
</dbReference>
<dbReference type="GO" id="GO:0020037">
    <property type="term" value="F:heme binding"/>
    <property type="evidence" value="ECO:0007669"/>
    <property type="project" value="InterPro"/>
</dbReference>
<dbReference type="GO" id="GO:0046872">
    <property type="term" value="F:metal ion binding"/>
    <property type="evidence" value="ECO:0007669"/>
    <property type="project" value="UniProtKB-KW"/>
</dbReference>
<dbReference type="GO" id="GO:0004517">
    <property type="term" value="F:nitric-oxide synthase activity"/>
    <property type="evidence" value="ECO:0007669"/>
    <property type="project" value="InterPro"/>
</dbReference>
<dbReference type="GO" id="GO:0006809">
    <property type="term" value="P:nitric oxide biosynthetic process"/>
    <property type="evidence" value="ECO:0007669"/>
    <property type="project" value="InterPro"/>
</dbReference>
<dbReference type="CDD" id="cd00794">
    <property type="entry name" value="NOS_oxygenase_prok"/>
    <property type="match status" value="1"/>
</dbReference>
<dbReference type="Gene3D" id="3.90.340.10">
    <property type="entry name" value="Nitric Oxide Synthase, Chain A, domain 1"/>
    <property type="match status" value="1"/>
</dbReference>
<dbReference type="Gene3D" id="3.90.1230.10">
    <property type="entry name" value="Nitric Oxide Synthase, Chain A, domain 3"/>
    <property type="match status" value="1"/>
</dbReference>
<dbReference type="Gene3D" id="3.90.440.10">
    <property type="entry name" value="Nitric Oxide Synthase,Heme Domain,Chain A domain 2"/>
    <property type="match status" value="1"/>
</dbReference>
<dbReference type="InterPro" id="IPR017142">
    <property type="entry name" value="Nitric_oxide_synthase_Oase-su"/>
</dbReference>
<dbReference type="InterPro" id="IPR050607">
    <property type="entry name" value="NOS"/>
</dbReference>
<dbReference type="InterPro" id="IPR044943">
    <property type="entry name" value="NOS_dom_1"/>
</dbReference>
<dbReference type="InterPro" id="IPR044940">
    <property type="entry name" value="NOS_dom_2"/>
</dbReference>
<dbReference type="InterPro" id="IPR044944">
    <property type="entry name" value="NOS_dom_3"/>
</dbReference>
<dbReference type="InterPro" id="IPR004030">
    <property type="entry name" value="NOS_N"/>
</dbReference>
<dbReference type="InterPro" id="IPR036119">
    <property type="entry name" value="NOS_N_sf"/>
</dbReference>
<dbReference type="PANTHER" id="PTHR43410:SF1">
    <property type="entry name" value="NITRIC OXIDE SYNTHASE"/>
    <property type="match status" value="1"/>
</dbReference>
<dbReference type="PANTHER" id="PTHR43410">
    <property type="entry name" value="NITRIC OXIDE SYNTHASE OXYGENASE"/>
    <property type="match status" value="1"/>
</dbReference>
<dbReference type="Pfam" id="PF02898">
    <property type="entry name" value="NO_synthase"/>
    <property type="match status" value="1"/>
</dbReference>
<dbReference type="PIRSF" id="PIRSF037219">
    <property type="entry name" value="NOS_oxygenase"/>
    <property type="match status" value="1"/>
</dbReference>
<dbReference type="SUPFAM" id="SSF56512">
    <property type="entry name" value="Nitric oxide (NO) synthase oxygenase domain"/>
    <property type="match status" value="1"/>
</dbReference>
<dbReference type="PROSITE" id="PS60001">
    <property type="entry name" value="NOS"/>
    <property type="match status" value="1"/>
</dbReference>
<evidence type="ECO:0000250" key="1"/>
<evidence type="ECO:0000250" key="2">
    <source>
        <dbReference type="UniProtKB" id="O34453"/>
    </source>
</evidence>
<evidence type="ECO:0000305" key="3"/>
<gene>
    <name type="primary">nos</name>
    <name type="ordered locus">SAR2007</name>
</gene>
<organism>
    <name type="scientific">Staphylococcus aureus (strain MRSA252)</name>
    <dbReference type="NCBI Taxonomy" id="282458"/>
    <lineage>
        <taxon>Bacteria</taxon>
        <taxon>Bacillati</taxon>
        <taxon>Bacillota</taxon>
        <taxon>Bacilli</taxon>
        <taxon>Bacillales</taxon>
        <taxon>Staphylococcaceae</taxon>
        <taxon>Staphylococcus</taxon>
    </lineage>
</organism>